<keyword id="KW-0067">ATP-binding</keyword>
<keyword id="KW-0115">cAMP biosynthesis</keyword>
<keyword id="KW-0963">Cytoplasm</keyword>
<keyword id="KW-0456">Lyase</keyword>
<keyword id="KW-0547">Nucleotide-binding</keyword>
<keyword id="KW-0597">Phosphoprotein</keyword>
<keyword id="KW-1185">Reference proteome</keyword>
<reference key="1">
    <citation type="journal article" date="2001" name="Nature">
        <title>Genome sequence of enterohaemorrhagic Escherichia coli O157:H7.</title>
        <authorList>
            <person name="Perna N.T."/>
            <person name="Plunkett G. III"/>
            <person name="Burland V."/>
            <person name="Mau B."/>
            <person name="Glasner J.D."/>
            <person name="Rose D.J."/>
            <person name="Mayhew G.F."/>
            <person name="Evans P.S."/>
            <person name="Gregor J."/>
            <person name="Kirkpatrick H.A."/>
            <person name="Posfai G."/>
            <person name="Hackett J."/>
            <person name="Klink S."/>
            <person name="Boutin A."/>
            <person name="Shao Y."/>
            <person name="Miller L."/>
            <person name="Grotbeck E.J."/>
            <person name="Davis N.W."/>
            <person name="Lim A."/>
            <person name="Dimalanta E.T."/>
            <person name="Potamousis K."/>
            <person name="Apodaca J."/>
            <person name="Anantharaman T.S."/>
            <person name="Lin J."/>
            <person name="Yen G."/>
            <person name="Schwartz D.C."/>
            <person name="Welch R.A."/>
            <person name="Blattner F.R."/>
        </authorList>
    </citation>
    <scope>NUCLEOTIDE SEQUENCE [LARGE SCALE GENOMIC DNA]</scope>
    <source>
        <strain>O157:H7 / EDL933 / ATCC 700927 / EHEC</strain>
    </source>
</reference>
<reference key="2">
    <citation type="journal article" date="2001" name="DNA Res.">
        <title>Complete genome sequence of enterohemorrhagic Escherichia coli O157:H7 and genomic comparison with a laboratory strain K-12.</title>
        <authorList>
            <person name="Hayashi T."/>
            <person name="Makino K."/>
            <person name="Ohnishi M."/>
            <person name="Kurokawa K."/>
            <person name="Ishii K."/>
            <person name="Yokoyama K."/>
            <person name="Han C.-G."/>
            <person name="Ohtsubo E."/>
            <person name="Nakayama K."/>
            <person name="Murata T."/>
            <person name="Tanaka M."/>
            <person name="Tobe T."/>
            <person name="Iida T."/>
            <person name="Takami H."/>
            <person name="Honda T."/>
            <person name="Sasakawa C."/>
            <person name="Ogasawara N."/>
            <person name="Yasunaga T."/>
            <person name="Kuhara S."/>
            <person name="Shiba T."/>
            <person name="Hattori M."/>
            <person name="Shinagawa H."/>
        </authorList>
    </citation>
    <scope>NUCLEOTIDE SEQUENCE [LARGE SCALE GENOMIC DNA]</scope>
    <source>
        <strain>O157:H7 / Sakai / RIMD 0509952 / EHEC</strain>
    </source>
</reference>
<protein>
    <recommendedName>
        <fullName>Adenylate cyclase</fullName>
        <ecNumber>4.6.1.1</ecNumber>
    </recommendedName>
    <alternativeName>
        <fullName>ATP pyrophosphate-lyase</fullName>
    </alternativeName>
    <alternativeName>
        <fullName>Adenylyl cyclase</fullName>
    </alternativeName>
</protein>
<dbReference type="EC" id="4.6.1.1"/>
<dbReference type="EMBL" id="AE005174">
    <property type="protein sequence ID" value="AAG58998.1"/>
    <property type="molecule type" value="Genomic_DNA"/>
</dbReference>
<dbReference type="EMBL" id="BA000007">
    <property type="protein sequence ID" value="BAB38159.1"/>
    <property type="molecule type" value="Genomic_DNA"/>
</dbReference>
<dbReference type="PIR" id="B86067">
    <property type="entry name" value="B86067"/>
</dbReference>
<dbReference type="PIR" id="H91220">
    <property type="entry name" value="H91220"/>
</dbReference>
<dbReference type="RefSeq" id="NP_312763.1">
    <property type="nucleotide sequence ID" value="NC_002695.1"/>
</dbReference>
<dbReference type="RefSeq" id="WP_000281680.1">
    <property type="nucleotide sequence ID" value="NZ_VOAI01000017.1"/>
</dbReference>
<dbReference type="STRING" id="155864.Z5322"/>
<dbReference type="GeneID" id="915191"/>
<dbReference type="GeneID" id="93778138"/>
<dbReference type="KEGG" id="ece:Z5322"/>
<dbReference type="KEGG" id="ecs:ECs_4736"/>
<dbReference type="PATRIC" id="fig|386585.9.peg.4942"/>
<dbReference type="eggNOG" id="COG3072">
    <property type="taxonomic scope" value="Bacteria"/>
</dbReference>
<dbReference type="HOGENOM" id="CLU_013280_0_0_6"/>
<dbReference type="OMA" id="YDDYVMS"/>
<dbReference type="Proteomes" id="UP000000558">
    <property type="component" value="Chromosome"/>
</dbReference>
<dbReference type="Proteomes" id="UP000002519">
    <property type="component" value="Chromosome"/>
</dbReference>
<dbReference type="GO" id="GO:0005737">
    <property type="term" value="C:cytoplasm"/>
    <property type="evidence" value="ECO:0007669"/>
    <property type="project" value="UniProtKB-SubCell"/>
</dbReference>
<dbReference type="GO" id="GO:0004016">
    <property type="term" value="F:adenylate cyclase activity"/>
    <property type="evidence" value="ECO:0007669"/>
    <property type="project" value="UniProtKB-EC"/>
</dbReference>
<dbReference type="GO" id="GO:0005524">
    <property type="term" value="F:ATP binding"/>
    <property type="evidence" value="ECO:0007669"/>
    <property type="project" value="UniProtKB-KW"/>
</dbReference>
<dbReference type="GO" id="GO:0006171">
    <property type="term" value="P:cAMP biosynthetic process"/>
    <property type="evidence" value="ECO:0007669"/>
    <property type="project" value="UniProtKB-KW"/>
</dbReference>
<dbReference type="InterPro" id="IPR000274">
    <property type="entry name" value="Adenylate_cyclase_1"/>
</dbReference>
<dbReference type="InterPro" id="IPR024686">
    <property type="entry name" value="Adenylate_cyclase_1_CS"/>
</dbReference>
<dbReference type="InterPro" id="IPR024685">
    <property type="entry name" value="Adenylate_cyclase_1_N"/>
</dbReference>
<dbReference type="NCBIfam" id="NF006977">
    <property type="entry name" value="PRK09450.1-1"/>
    <property type="match status" value="1"/>
</dbReference>
<dbReference type="NCBIfam" id="NF006978">
    <property type="entry name" value="PRK09450.1-2"/>
    <property type="match status" value="1"/>
</dbReference>
<dbReference type="NCBIfam" id="NF006979">
    <property type="entry name" value="PRK09450.1-4"/>
    <property type="match status" value="1"/>
</dbReference>
<dbReference type="PANTHER" id="PTHR38760">
    <property type="entry name" value="ADENYLATE CYCLASE"/>
    <property type="match status" value="1"/>
</dbReference>
<dbReference type="PANTHER" id="PTHR38760:SF1">
    <property type="entry name" value="ADENYLATE CYCLASE"/>
    <property type="match status" value="1"/>
</dbReference>
<dbReference type="Pfam" id="PF12633">
    <property type="entry name" value="Adenyl_cycl_N"/>
    <property type="match status" value="1"/>
</dbReference>
<dbReference type="Pfam" id="PF01295">
    <property type="entry name" value="Adenylate_cycl"/>
    <property type="match status" value="1"/>
</dbReference>
<dbReference type="PIRSF" id="PIRSF001444">
    <property type="entry name" value="Adenylate_cycl"/>
    <property type="match status" value="1"/>
</dbReference>
<dbReference type="PROSITE" id="PS01092">
    <property type="entry name" value="ADENYLATE_CYCLASE_1_1"/>
    <property type="match status" value="1"/>
</dbReference>
<dbReference type="PROSITE" id="PS01093">
    <property type="entry name" value="ADENYLATE_CYCLASE_1_2"/>
    <property type="match status" value="1"/>
</dbReference>
<evidence type="ECO:0000250" key="1"/>
<evidence type="ECO:0000255" key="2"/>
<evidence type="ECO:0000305" key="3"/>
<proteinExistence type="inferred from homology"/>
<accession>Q8XAP1</accession>
<gene>
    <name type="primary">cyaA</name>
    <name type="ordered locus">Z5322</name>
    <name type="ordered locus">ECs4736</name>
</gene>
<name>CYAA_ECO57</name>
<sequence>MYLYIETLKQRLDAINQLRVDRALAAMGPAFQQVYSLLPTLLHYHHPLMPGYLDGNVPKGICLYTPDETQRHYLNELELYRGMSVQDPPKGELPITGVYTMGSTSSVGQSCSSDLDIWVCHQSWLDSEERQLLQRKCSLLESWAASLGVEVSFFLIDENRFRHNESGSLGGEDCGSTQHILLLDEFYRTAVRLAGKRILWNMVPCDEEEHYDDYVMTLYAQGVLTPNEWLDLGGLSSLSAEEYFGASLWQLYKSIDSPYKAVLKTLLLEAYSWEYPNPRLLAKDIKQRLHDGEIVSFGLDPYCMMLERVTEYLTAIEDFTRLDLVRRCFYLKVCEKLSRERACVGWRRAVLSQLVSEWGWDEARLAMLDNRANWKIDQVREAHNELLDAMMQSYRNLIRFARRNNLSVSASPQDIGVLTRKLYAAFEALPGKVTLVNPQISPDLSEPNLTFIYVPPGRANRSGWYLYNRAPNIESIISHQPLEYNRYLNKLVAWAWFNGLLTSRTRLYIKGNGIVDLPKLQEMVADVSHHFPLRLPAPTPKALYSPCEIRHLAIIVNLEYDPTAAFRNQVVHFDFRKLDVFSFGENQNCLVGSVDLLYRNSWNEVRTLHFNGEQSMIEALKTILGKMHQDAAPPDSVEVFCYSQHLRGLIRTRVQQLVSECIELRLSSTRQETGRFKALRVSGQTWGLFFERLNVSVQKLENAIEFYGAISHNKLHGLSVQVETNHVKLPAVVDGFASEGIIQFFFEETQDENGFNIYILDESNRVEVYHHCEGSKEELVRDVSRFYSSSHDRFTYGSSFINFNLPQFYQIVKVDGREQVIPFRTKSIGNMPPANQDHDTPLLQQYFS</sequence>
<organism>
    <name type="scientific">Escherichia coli O157:H7</name>
    <dbReference type="NCBI Taxonomy" id="83334"/>
    <lineage>
        <taxon>Bacteria</taxon>
        <taxon>Pseudomonadati</taxon>
        <taxon>Pseudomonadota</taxon>
        <taxon>Gammaproteobacteria</taxon>
        <taxon>Enterobacterales</taxon>
        <taxon>Enterobacteriaceae</taxon>
        <taxon>Escherichia</taxon>
    </lineage>
</organism>
<feature type="chain" id="PRO_0000195671" description="Adenylate cyclase">
    <location>
        <begin position="1"/>
        <end position="848"/>
    </location>
</feature>
<feature type="region of interest" description="Catalytic">
    <location>
        <begin position="1"/>
        <end position="535"/>
    </location>
</feature>
<feature type="region of interest" description="Regulatory">
    <location>
        <begin position="541"/>
        <end position="848"/>
    </location>
</feature>
<feature type="modified residue" description="Phosphohistidine; by CRR" evidence="2">
    <location>
        <position position="609"/>
    </location>
</feature>
<comment type="catalytic activity">
    <reaction>
        <text>ATP = 3',5'-cyclic AMP + diphosphate</text>
        <dbReference type="Rhea" id="RHEA:15389"/>
        <dbReference type="ChEBI" id="CHEBI:30616"/>
        <dbReference type="ChEBI" id="CHEBI:33019"/>
        <dbReference type="ChEBI" id="CHEBI:58165"/>
        <dbReference type="EC" id="4.6.1.1"/>
    </reaction>
</comment>
<comment type="subcellular location">
    <subcellularLocation>
        <location evidence="1">Cytoplasm</location>
    </subcellularLocation>
</comment>
<comment type="similarity">
    <text evidence="3">Belongs to the adenylyl cyclase class-1 family.</text>
</comment>